<organism>
    <name type="scientific">Xanthomonas axonopodis pv. citri (strain 306)</name>
    <dbReference type="NCBI Taxonomy" id="190486"/>
    <lineage>
        <taxon>Bacteria</taxon>
        <taxon>Pseudomonadati</taxon>
        <taxon>Pseudomonadota</taxon>
        <taxon>Gammaproteobacteria</taxon>
        <taxon>Lysobacterales</taxon>
        <taxon>Lysobacteraceae</taxon>
        <taxon>Xanthomonas</taxon>
    </lineage>
</organism>
<reference key="1">
    <citation type="journal article" date="2002" name="Nature">
        <title>Comparison of the genomes of two Xanthomonas pathogens with differing host specificities.</title>
        <authorList>
            <person name="da Silva A.C.R."/>
            <person name="Ferro J.A."/>
            <person name="Reinach F.C."/>
            <person name="Farah C.S."/>
            <person name="Furlan L.R."/>
            <person name="Quaggio R.B."/>
            <person name="Monteiro-Vitorello C.B."/>
            <person name="Van Sluys M.A."/>
            <person name="Almeida N.F. Jr."/>
            <person name="Alves L.M.C."/>
            <person name="do Amaral A.M."/>
            <person name="Bertolini M.C."/>
            <person name="Camargo L.E.A."/>
            <person name="Camarotte G."/>
            <person name="Cannavan F."/>
            <person name="Cardozo J."/>
            <person name="Chambergo F."/>
            <person name="Ciapina L.P."/>
            <person name="Cicarelli R.M.B."/>
            <person name="Coutinho L.L."/>
            <person name="Cursino-Santos J.R."/>
            <person name="El-Dorry H."/>
            <person name="Faria J.B."/>
            <person name="Ferreira A.J.S."/>
            <person name="Ferreira R.C.C."/>
            <person name="Ferro M.I.T."/>
            <person name="Formighieri E.F."/>
            <person name="Franco M.C."/>
            <person name="Greggio C.C."/>
            <person name="Gruber A."/>
            <person name="Katsuyama A.M."/>
            <person name="Kishi L.T."/>
            <person name="Leite R.P."/>
            <person name="Lemos E.G.M."/>
            <person name="Lemos M.V.F."/>
            <person name="Locali E.C."/>
            <person name="Machado M.A."/>
            <person name="Madeira A.M.B.N."/>
            <person name="Martinez-Rossi N.M."/>
            <person name="Martins E.C."/>
            <person name="Meidanis J."/>
            <person name="Menck C.F.M."/>
            <person name="Miyaki C.Y."/>
            <person name="Moon D.H."/>
            <person name="Moreira L.M."/>
            <person name="Novo M.T.M."/>
            <person name="Okura V.K."/>
            <person name="Oliveira M.C."/>
            <person name="Oliveira V.R."/>
            <person name="Pereira H.A."/>
            <person name="Rossi A."/>
            <person name="Sena J.A.D."/>
            <person name="Silva C."/>
            <person name="de Souza R.F."/>
            <person name="Spinola L.A.F."/>
            <person name="Takita M.A."/>
            <person name="Tamura R.E."/>
            <person name="Teixeira E.C."/>
            <person name="Tezza R.I.D."/>
            <person name="Trindade dos Santos M."/>
            <person name="Truffi D."/>
            <person name="Tsai S.M."/>
            <person name="White F.F."/>
            <person name="Setubal J.C."/>
            <person name="Kitajima J.P."/>
        </authorList>
    </citation>
    <scope>NUCLEOTIDE SEQUENCE [LARGE SCALE GENOMIC DNA]</scope>
    <source>
        <strain>306</strain>
    </source>
</reference>
<comment type="similarity">
    <text evidence="1">Belongs to the UPF0301 (AlgH) family.</text>
</comment>
<feature type="chain" id="PRO_0000214355" description="UPF0301 protein XAC2918">
    <location>
        <begin position="1"/>
        <end position="188"/>
    </location>
</feature>
<gene>
    <name type="ordered locus">XAC2918</name>
</gene>
<dbReference type="EMBL" id="AE008923">
    <property type="protein sequence ID" value="AAM37763.1"/>
    <property type="molecule type" value="Genomic_DNA"/>
</dbReference>
<dbReference type="RefSeq" id="WP_011051924.1">
    <property type="nucleotide sequence ID" value="NC_003919.1"/>
</dbReference>
<dbReference type="SMR" id="Q8PIH9"/>
<dbReference type="KEGG" id="xac:XAC2918"/>
<dbReference type="eggNOG" id="COG1678">
    <property type="taxonomic scope" value="Bacteria"/>
</dbReference>
<dbReference type="HOGENOM" id="CLU_057596_1_0_6"/>
<dbReference type="Proteomes" id="UP000000576">
    <property type="component" value="Chromosome"/>
</dbReference>
<dbReference type="GO" id="GO:0005829">
    <property type="term" value="C:cytosol"/>
    <property type="evidence" value="ECO:0007669"/>
    <property type="project" value="TreeGrafter"/>
</dbReference>
<dbReference type="Gene3D" id="3.40.1740.10">
    <property type="entry name" value="VC0467-like"/>
    <property type="match status" value="1"/>
</dbReference>
<dbReference type="HAMAP" id="MF_00758">
    <property type="entry name" value="UPF0301"/>
    <property type="match status" value="1"/>
</dbReference>
<dbReference type="InterPro" id="IPR003774">
    <property type="entry name" value="AlgH-like"/>
</dbReference>
<dbReference type="NCBIfam" id="NF001266">
    <property type="entry name" value="PRK00228.1-1"/>
    <property type="match status" value="1"/>
</dbReference>
<dbReference type="PANTHER" id="PTHR30327">
    <property type="entry name" value="UNCHARACTERIZED PROTEIN YQGE"/>
    <property type="match status" value="1"/>
</dbReference>
<dbReference type="PANTHER" id="PTHR30327:SF1">
    <property type="entry name" value="UPF0301 PROTEIN YQGE"/>
    <property type="match status" value="1"/>
</dbReference>
<dbReference type="Pfam" id="PF02622">
    <property type="entry name" value="DUF179"/>
    <property type="match status" value="1"/>
</dbReference>
<dbReference type="SUPFAM" id="SSF143456">
    <property type="entry name" value="VC0467-like"/>
    <property type="match status" value="1"/>
</dbReference>
<sequence>MSVLPTPLANQLLIALPALSDPTFSRSVALICQHDENGAMGVLVNRPSEYTLGEVLSQMGIDTVDEHLREQIVLSGGPVHPERGFVIHDDARDWDSSLEVGQGVYLTTSRDILEAMAAGEGPRNALVALGCAGWGAGQLEFELGENSWLTAPSDANVLFATALEDRWQTAAGRIGVDLFRLTDYSGHA</sequence>
<accession>Q8PIH9</accession>
<name>Y2918_XANAC</name>
<protein>
    <recommendedName>
        <fullName evidence="1">UPF0301 protein XAC2918</fullName>
    </recommendedName>
</protein>
<proteinExistence type="inferred from homology"/>
<evidence type="ECO:0000255" key="1">
    <source>
        <dbReference type="HAMAP-Rule" id="MF_00758"/>
    </source>
</evidence>